<reference key="1">
    <citation type="journal article" date="1998" name="Microbiology">
        <title>A 35.7 kb DNA fragment from the Bacillus subtilis chromosome containing a putative 12.3 kb operon involved in hexuronate catabolism and a perfectly symmetrical hypothetical catabolite-responsive element.</title>
        <authorList>
            <person name="Rivolta C."/>
            <person name="Soldo B."/>
            <person name="Lazarevic V."/>
            <person name="Joris B."/>
            <person name="Mauel C."/>
            <person name="Karamata D."/>
        </authorList>
    </citation>
    <scope>NUCLEOTIDE SEQUENCE [GENOMIC DNA]</scope>
    <scope>PROBABLE OPERON STRUCTURE</scope>
    <source>
        <strain>168</strain>
    </source>
</reference>
<reference key="2">
    <citation type="journal article" date="1997" name="Nature">
        <title>The complete genome sequence of the Gram-positive bacterium Bacillus subtilis.</title>
        <authorList>
            <person name="Kunst F."/>
            <person name="Ogasawara N."/>
            <person name="Moszer I."/>
            <person name="Albertini A.M."/>
            <person name="Alloni G."/>
            <person name="Azevedo V."/>
            <person name="Bertero M.G."/>
            <person name="Bessieres P."/>
            <person name="Bolotin A."/>
            <person name="Borchert S."/>
            <person name="Borriss R."/>
            <person name="Boursier L."/>
            <person name="Brans A."/>
            <person name="Braun M."/>
            <person name="Brignell S.C."/>
            <person name="Bron S."/>
            <person name="Brouillet S."/>
            <person name="Bruschi C.V."/>
            <person name="Caldwell B."/>
            <person name="Capuano V."/>
            <person name="Carter N.M."/>
            <person name="Choi S.-K."/>
            <person name="Codani J.-J."/>
            <person name="Connerton I.F."/>
            <person name="Cummings N.J."/>
            <person name="Daniel R.A."/>
            <person name="Denizot F."/>
            <person name="Devine K.M."/>
            <person name="Duesterhoeft A."/>
            <person name="Ehrlich S.D."/>
            <person name="Emmerson P.T."/>
            <person name="Entian K.-D."/>
            <person name="Errington J."/>
            <person name="Fabret C."/>
            <person name="Ferrari E."/>
            <person name="Foulger D."/>
            <person name="Fritz C."/>
            <person name="Fujita M."/>
            <person name="Fujita Y."/>
            <person name="Fuma S."/>
            <person name="Galizzi A."/>
            <person name="Galleron N."/>
            <person name="Ghim S.-Y."/>
            <person name="Glaser P."/>
            <person name="Goffeau A."/>
            <person name="Golightly E.J."/>
            <person name="Grandi G."/>
            <person name="Guiseppi G."/>
            <person name="Guy B.J."/>
            <person name="Haga K."/>
            <person name="Haiech J."/>
            <person name="Harwood C.R."/>
            <person name="Henaut A."/>
            <person name="Hilbert H."/>
            <person name="Holsappel S."/>
            <person name="Hosono S."/>
            <person name="Hullo M.-F."/>
            <person name="Itaya M."/>
            <person name="Jones L.-M."/>
            <person name="Joris B."/>
            <person name="Karamata D."/>
            <person name="Kasahara Y."/>
            <person name="Klaerr-Blanchard M."/>
            <person name="Klein C."/>
            <person name="Kobayashi Y."/>
            <person name="Koetter P."/>
            <person name="Koningstein G."/>
            <person name="Krogh S."/>
            <person name="Kumano M."/>
            <person name="Kurita K."/>
            <person name="Lapidus A."/>
            <person name="Lardinois S."/>
            <person name="Lauber J."/>
            <person name="Lazarevic V."/>
            <person name="Lee S.-M."/>
            <person name="Levine A."/>
            <person name="Liu H."/>
            <person name="Masuda S."/>
            <person name="Mauel C."/>
            <person name="Medigue C."/>
            <person name="Medina N."/>
            <person name="Mellado R.P."/>
            <person name="Mizuno M."/>
            <person name="Moestl D."/>
            <person name="Nakai S."/>
            <person name="Noback M."/>
            <person name="Noone D."/>
            <person name="O'Reilly M."/>
            <person name="Ogawa K."/>
            <person name="Ogiwara A."/>
            <person name="Oudega B."/>
            <person name="Park S.-H."/>
            <person name="Parro V."/>
            <person name="Pohl T.M."/>
            <person name="Portetelle D."/>
            <person name="Porwollik S."/>
            <person name="Prescott A.M."/>
            <person name="Presecan E."/>
            <person name="Pujic P."/>
            <person name="Purnelle B."/>
            <person name="Rapoport G."/>
            <person name="Rey M."/>
            <person name="Reynolds S."/>
            <person name="Rieger M."/>
            <person name="Rivolta C."/>
            <person name="Rocha E."/>
            <person name="Roche B."/>
            <person name="Rose M."/>
            <person name="Sadaie Y."/>
            <person name="Sato T."/>
            <person name="Scanlan E."/>
            <person name="Schleich S."/>
            <person name="Schroeter R."/>
            <person name="Scoffone F."/>
            <person name="Sekiguchi J."/>
            <person name="Sekowska A."/>
            <person name="Seror S.J."/>
            <person name="Serror P."/>
            <person name="Shin B.-S."/>
            <person name="Soldo B."/>
            <person name="Sorokin A."/>
            <person name="Tacconi E."/>
            <person name="Takagi T."/>
            <person name="Takahashi H."/>
            <person name="Takemaru K."/>
            <person name="Takeuchi M."/>
            <person name="Tamakoshi A."/>
            <person name="Tanaka T."/>
            <person name="Terpstra P."/>
            <person name="Tognoni A."/>
            <person name="Tosato V."/>
            <person name="Uchiyama S."/>
            <person name="Vandenbol M."/>
            <person name="Vannier F."/>
            <person name="Vassarotti A."/>
            <person name="Viari A."/>
            <person name="Wambutt R."/>
            <person name="Wedler E."/>
            <person name="Wedler H."/>
            <person name="Weitzenegger T."/>
            <person name="Winters P."/>
            <person name="Wipat A."/>
            <person name="Yamamoto H."/>
            <person name="Yamane K."/>
            <person name="Yasumoto K."/>
            <person name="Yata K."/>
            <person name="Yoshida K."/>
            <person name="Yoshikawa H.-F."/>
            <person name="Zumstein E."/>
            <person name="Yoshikawa H."/>
            <person name="Danchin A."/>
        </authorList>
    </citation>
    <scope>NUCLEOTIDE SEQUENCE [LARGE SCALE GENOMIC DNA]</scope>
    <source>
        <strain>168</strain>
    </source>
</reference>
<reference key="3">
    <citation type="journal article" date="1999" name="J. Bacteriol.">
        <title>Regulation of hexuronate utilization in Bacillus subtilis.</title>
        <authorList>
            <person name="Mekjian K.R."/>
            <person name="Bryan E.M."/>
            <person name="Beall B.W."/>
            <person name="Moran C.P. Jr."/>
        </authorList>
    </citation>
    <scope>PROBABLE OPERON STRUCTURE</scope>
    <scope>INDUCTION</scope>
    <source>
        <strain>168 / MB24</strain>
    </source>
</reference>
<proteinExistence type="evidence at transcript level"/>
<gene>
    <name type="primary">uxuA</name>
    <name type="synonym">yjmE</name>
    <name type="ordered locus">BSU12340</name>
</gene>
<name>UXUA_BACSU</name>
<evidence type="ECO:0000250" key="1"/>
<evidence type="ECO:0000305" key="2"/>
<evidence type="ECO:0000305" key="3">
    <source>
    </source>
</evidence>
<dbReference type="EC" id="4.2.1.8"/>
<dbReference type="EMBL" id="AF015825">
    <property type="protein sequence ID" value="AAC46330.1"/>
    <property type="molecule type" value="Genomic_DNA"/>
</dbReference>
<dbReference type="EMBL" id="AL009126">
    <property type="protein sequence ID" value="CAB13091.1"/>
    <property type="molecule type" value="Genomic_DNA"/>
</dbReference>
<dbReference type="PIR" id="G69852">
    <property type="entry name" value="G69852"/>
</dbReference>
<dbReference type="RefSeq" id="NP_389116.1">
    <property type="nucleotide sequence ID" value="NC_000964.3"/>
</dbReference>
<dbReference type="RefSeq" id="WP_003244855.1">
    <property type="nucleotide sequence ID" value="NZ_OZ025638.1"/>
</dbReference>
<dbReference type="SMR" id="O34346"/>
<dbReference type="FunCoup" id="O34346">
    <property type="interactions" value="98"/>
</dbReference>
<dbReference type="STRING" id="224308.BSU12340"/>
<dbReference type="PaxDb" id="224308-BSU12340"/>
<dbReference type="EnsemblBacteria" id="CAB13091">
    <property type="protein sequence ID" value="CAB13091"/>
    <property type="gene ID" value="BSU_12340"/>
</dbReference>
<dbReference type="GeneID" id="939409"/>
<dbReference type="KEGG" id="bsu:BSU12340"/>
<dbReference type="PATRIC" id="fig|224308.179.peg.1335"/>
<dbReference type="eggNOG" id="COG1312">
    <property type="taxonomic scope" value="Bacteria"/>
</dbReference>
<dbReference type="InParanoid" id="O34346"/>
<dbReference type="OrthoDB" id="9780250at2"/>
<dbReference type="PhylomeDB" id="O34346"/>
<dbReference type="BioCyc" id="BSUB:BSU12340-MONOMER"/>
<dbReference type="UniPathway" id="UPA00246"/>
<dbReference type="Proteomes" id="UP000001570">
    <property type="component" value="Chromosome"/>
</dbReference>
<dbReference type="GO" id="GO:0008198">
    <property type="term" value="F:ferrous iron binding"/>
    <property type="evidence" value="ECO:0000318"/>
    <property type="project" value="GO_Central"/>
</dbReference>
<dbReference type="GO" id="GO:0030145">
    <property type="term" value="F:manganese ion binding"/>
    <property type="evidence" value="ECO:0000318"/>
    <property type="project" value="GO_Central"/>
</dbReference>
<dbReference type="GO" id="GO:0008927">
    <property type="term" value="F:mannonate dehydratase activity"/>
    <property type="evidence" value="ECO:0000318"/>
    <property type="project" value="GO_Central"/>
</dbReference>
<dbReference type="GO" id="GO:0042840">
    <property type="term" value="P:D-glucuronate catabolic process"/>
    <property type="evidence" value="ECO:0000318"/>
    <property type="project" value="GO_Central"/>
</dbReference>
<dbReference type="Gene3D" id="3.20.20.150">
    <property type="entry name" value="Divalent-metal-dependent TIM barrel enzymes"/>
    <property type="match status" value="1"/>
</dbReference>
<dbReference type="HAMAP" id="MF_00106">
    <property type="entry name" value="UxuA"/>
    <property type="match status" value="1"/>
</dbReference>
<dbReference type="InterPro" id="IPR004628">
    <property type="entry name" value="Man_deHydtase"/>
</dbReference>
<dbReference type="InterPro" id="IPR036237">
    <property type="entry name" value="Xyl_isomerase-like_sf"/>
</dbReference>
<dbReference type="NCBIfam" id="NF003027">
    <property type="entry name" value="PRK03906.1"/>
    <property type="match status" value="1"/>
</dbReference>
<dbReference type="NCBIfam" id="TIGR00695">
    <property type="entry name" value="uxuA"/>
    <property type="match status" value="1"/>
</dbReference>
<dbReference type="PANTHER" id="PTHR30387">
    <property type="entry name" value="MANNONATE DEHYDRATASE"/>
    <property type="match status" value="1"/>
</dbReference>
<dbReference type="PANTHER" id="PTHR30387:SF2">
    <property type="entry name" value="MANNONATE DEHYDRATASE"/>
    <property type="match status" value="1"/>
</dbReference>
<dbReference type="Pfam" id="PF03786">
    <property type="entry name" value="UxuA"/>
    <property type="match status" value="1"/>
</dbReference>
<dbReference type="PIRSF" id="PIRSF016049">
    <property type="entry name" value="Man_dehyd"/>
    <property type="match status" value="1"/>
</dbReference>
<dbReference type="SUPFAM" id="SSF51658">
    <property type="entry name" value="Xylose isomerase-like"/>
    <property type="match status" value="1"/>
</dbReference>
<feature type="chain" id="PRO_0000170664" description="Mannonate dehydratase">
    <location>
        <begin position="1"/>
        <end position="359"/>
    </location>
</feature>
<comment type="function">
    <text evidence="1">Catalyzes the dehydration of D-mannonate.</text>
</comment>
<comment type="catalytic activity">
    <reaction>
        <text>D-mannonate = 2-dehydro-3-deoxy-D-gluconate + H2O</text>
        <dbReference type="Rhea" id="RHEA:20097"/>
        <dbReference type="ChEBI" id="CHEBI:15377"/>
        <dbReference type="ChEBI" id="CHEBI:17767"/>
        <dbReference type="ChEBI" id="CHEBI:57990"/>
        <dbReference type="EC" id="4.2.1.8"/>
    </reaction>
</comment>
<comment type="cofactor">
    <cofactor evidence="1">
        <name>Fe(2+)</name>
        <dbReference type="ChEBI" id="CHEBI:29033"/>
    </cofactor>
    <cofactor evidence="1">
        <name>Mn(2+)</name>
        <dbReference type="ChEBI" id="CHEBI:29035"/>
    </cofactor>
</comment>
<comment type="pathway">
    <text>Carbohydrate metabolism; pentose and glucuronate interconversion.</text>
</comment>
<comment type="induction">
    <text evidence="3">Induced by galacturonate, repressed by glucose.</text>
</comment>
<comment type="miscellaneous">
    <text>Member of the exu locus which is required for galacturonate utilization.</text>
</comment>
<comment type="similarity">
    <text evidence="2">Belongs to the mannonate dehydratase family.</text>
</comment>
<organism>
    <name type="scientific">Bacillus subtilis (strain 168)</name>
    <dbReference type="NCBI Taxonomy" id="224308"/>
    <lineage>
        <taxon>Bacteria</taxon>
        <taxon>Bacillati</taxon>
        <taxon>Bacillota</taxon>
        <taxon>Bacilli</taxon>
        <taxon>Bacillales</taxon>
        <taxon>Bacillaceae</taxon>
        <taxon>Bacillus</taxon>
    </lineage>
</organism>
<accession>O34346</accession>
<sequence>MNMTFRWYGRGNDTVTLEYVKQIPGVKGIVWALHQKPVGDVWEKEEIRAETEYIQSYGFHAEVVESVNVHEAIKLGNEERGRYIENYKQTIRNLAGFGVKVICYNFMPVFDWTRTDMFRPLEDGSTALFFEKAKVESLDPQELIRTVEEASDMTLPGWEPEKLARIKELFAAYRTVDEEKLWDNLSFFLQEILPVAEAYGVQMAIHPDDPPWPIFGLPRIITGEASYKKLRAISDSPSNCITLCTGSMGANPANDMVEIAKTYAGIAPFSHIRNVKIYENGDFIETSHLTKDGSINIQGVMEELHKQDYEGYVRPDHGRHLWGEQCRPGYGLYDRALGIMYLNGLWDAYEAMAKKEVGI</sequence>
<protein>
    <recommendedName>
        <fullName>Mannonate dehydratase</fullName>
        <ecNumber>4.2.1.8</ecNumber>
    </recommendedName>
    <alternativeName>
        <fullName>D-mannonate hydro-lyase</fullName>
    </alternativeName>
</protein>
<keyword id="KW-0408">Iron</keyword>
<keyword id="KW-0456">Lyase</keyword>
<keyword id="KW-0464">Manganese</keyword>
<keyword id="KW-1185">Reference proteome</keyword>